<name>DNAE2_AZOSB</name>
<reference key="1">
    <citation type="journal article" date="2006" name="Nat. Biotechnol.">
        <title>Complete genome of the mutualistic, N2-fixing grass endophyte Azoarcus sp. strain BH72.</title>
        <authorList>
            <person name="Krause A."/>
            <person name="Ramakumar A."/>
            <person name="Bartels D."/>
            <person name="Battistoni F."/>
            <person name="Bekel T."/>
            <person name="Boch J."/>
            <person name="Boehm M."/>
            <person name="Friedrich F."/>
            <person name="Hurek T."/>
            <person name="Krause L."/>
            <person name="Linke B."/>
            <person name="McHardy A.C."/>
            <person name="Sarkar A."/>
            <person name="Schneiker S."/>
            <person name="Syed A.A."/>
            <person name="Thauer R."/>
            <person name="Vorhoelter F.-J."/>
            <person name="Weidner S."/>
            <person name="Puehler A."/>
            <person name="Reinhold-Hurek B."/>
            <person name="Kaiser O."/>
            <person name="Goesmann A."/>
        </authorList>
    </citation>
    <scope>NUCLEOTIDE SEQUENCE [LARGE SCALE GENOMIC DNA]</scope>
    <source>
        <strain>BH72</strain>
    </source>
</reference>
<keyword id="KW-0963">Cytoplasm</keyword>
<keyword id="KW-0227">DNA damage</keyword>
<keyword id="KW-0234">DNA repair</keyword>
<keyword id="KW-0235">DNA replication</keyword>
<keyword id="KW-0239">DNA-directed DNA polymerase</keyword>
<keyword id="KW-0548">Nucleotidyltransferase</keyword>
<keyword id="KW-1185">Reference proteome</keyword>
<keyword id="KW-0808">Transferase</keyword>
<proteinExistence type="inferred from homology"/>
<feature type="chain" id="PRO_1000070588" description="Error-prone DNA polymerase">
    <location>
        <begin position="1"/>
        <end position="1064"/>
    </location>
</feature>
<organism>
    <name type="scientific">Azoarcus sp. (strain BH72)</name>
    <dbReference type="NCBI Taxonomy" id="418699"/>
    <lineage>
        <taxon>Bacteria</taxon>
        <taxon>Pseudomonadati</taxon>
        <taxon>Pseudomonadota</taxon>
        <taxon>Betaproteobacteria</taxon>
        <taxon>Rhodocyclales</taxon>
        <taxon>Zoogloeaceae</taxon>
        <taxon>Azoarcus</taxon>
    </lineage>
</organism>
<dbReference type="EC" id="2.7.7.7" evidence="1"/>
<dbReference type="EMBL" id="AM406670">
    <property type="protein sequence ID" value="CAL96573.1"/>
    <property type="molecule type" value="Genomic_DNA"/>
</dbReference>
<dbReference type="RefSeq" id="WP_011767679.1">
    <property type="nucleotide sequence ID" value="NC_008702.1"/>
</dbReference>
<dbReference type="SMR" id="A1KCL7"/>
<dbReference type="STRING" id="62928.azo3957"/>
<dbReference type="KEGG" id="azo:azo3957"/>
<dbReference type="eggNOG" id="COG0587">
    <property type="taxonomic scope" value="Bacteria"/>
</dbReference>
<dbReference type="HOGENOM" id="CLU_001600_4_0_4"/>
<dbReference type="Proteomes" id="UP000002588">
    <property type="component" value="Chromosome"/>
</dbReference>
<dbReference type="GO" id="GO:0005737">
    <property type="term" value="C:cytoplasm"/>
    <property type="evidence" value="ECO:0007669"/>
    <property type="project" value="UniProtKB-SubCell"/>
</dbReference>
<dbReference type="GO" id="GO:0008408">
    <property type="term" value="F:3'-5' exonuclease activity"/>
    <property type="evidence" value="ECO:0007669"/>
    <property type="project" value="InterPro"/>
</dbReference>
<dbReference type="GO" id="GO:0003887">
    <property type="term" value="F:DNA-directed DNA polymerase activity"/>
    <property type="evidence" value="ECO:0007669"/>
    <property type="project" value="UniProtKB-UniRule"/>
</dbReference>
<dbReference type="GO" id="GO:0003676">
    <property type="term" value="F:nucleic acid binding"/>
    <property type="evidence" value="ECO:0007669"/>
    <property type="project" value="InterPro"/>
</dbReference>
<dbReference type="GO" id="GO:0006281">
    <property type="term" value="P:DNA repair"/>
    <property type="evidence" value="ECO:0007669"/>
    <property type="project" value="UniProtKB-UniRule"/>
</dbReference>
<dbReference type="GO" id="GO:0006260">
    <property type="term" value="P:DNA replication"/>
    <property type="evidence" value="ECO:0007669"/>
    <property type="project" value="UniProtKB-KW"/>
</dbReference>
<dbReference type="CDD" id="cd04485">
    <property type="entry name" value="DnaE_OBF"/>
    <property type="match status" value="1"/>
</dbReference>
<dbReference type="CDD" id="cd07434">
    <property type="entry name" value="PHP_PolIIIA_DnaE2"/>
    <property type="match status" value="1"/>
</dbReference>
<dbReference type="Gene3D" id="1.10.150.870">
    <property type="match status" value="1"/>
</dbReference>
<dbReference type="Gene3D" id="3.20.20.140">
    <property type="entry name" value="Metal-dependent hydrolases"/>
    <property type="match status" value="1"/>
</dbReference>
<dbReference type="HAMAP" id="MF_01902">
    <property type="entry name" value="DNApol_error_prone"/>
    <property type="match status" value="1"/>
</dbReference>
<dbReference type="InterPro" id="IPR011708">
    <property type="entry name" value="DNA_pol3_alpha_NTPase_dom"/>
</dbReference>
<dbReference type="InterPro" id="IPR040982">
    <property type="entry name" value="DNA_pol3_finger"/>
</dbReference>
<dbReference type="InterPro" id="IPR023073">
    <property type="entry name" value="DnaE2"/>
</dbReference>
<dbReference type="InterPro" id="IPR004805">
    <property type="entry name" value="DnaE2/DnaE/PolC"/>
</dbReference>
<dbReference type="InterPro" id="IPR029460">
    <property type="entry name" value="DNAPol_HHH"/>
</dbReference>
<dbReference type="InterPro" id="IPR004365">
    <property type="entry name" value="NA-bd_OB_tRNA"/>
</dbReference>
<dbReference type="InterPro" id="IPR004013">
    <property type="entry name" value="PHP_dom"/>
</dbReference>
<dbReference type="InterPro" id="IPR003141">
    <property type="entry name" value="Pol/His_phosphatase_N"/>
</dbReference>
<dbReference type="InterPro" id="IPR016195">
    <property type="entry name" value="Pol/histidinol_Pase-like"/>
</dbReference>
<dbReference type="NCBIfam" id="TIGR00594">
    <property type="entry name" value="polc"/>
    <property type="match status" value="1"/>
</dbReference>
<dbReference type="NCBIfam" id="NF004225">
    <property type="entry name" value="PRK05672.1"/>
    <property type="match status" value="1"/>
</dbReference>
<dbReference type="PANTHER" id="PTHR32294">
    <property type="entry name" value="DNA POLYMERASE III SUBUNIT ALPHA"/>
    <property type="match status" value="1"/>
</dbReference>
<dbReference type="PANTHER" id="PTHR32294:SF4">
    <property type="entry name" value="ERROR-PRONE DNA POLYMERASE"/>
    <property type="match status" value="1"/>
</dbReference>
<dbReference type="Pfam" id="PF07733">
    <property type="entry name" value="DNA_pol3_alpha"/>
    <property type="match status" value="1"/>
</dbReference>
<dbReference type="Pfam" id="PF17657">
    <property type="entry name" value="DNA_pol3_finger"/>
    <property type="match status" value="1"/>
</dbReference>
<dbReference type="Pfam" id="PF14579">
    <property type="entry name" value="HHH_6"/>
    <property type="match status" value="1"/>
</dbReference>
<dbReference type="Pfam" id="PF02811">
    <property type="entry name" value="PHP"/>
    <property type="match status" value="1"/>
</dbReference>
<dbReference type="Pfam" id="PF01336">
    <property type="entry name" value="tRNA_anti-codon"/>
    <property type="match status" value="1"/>
</dbReference>
<dbReference type="SMART" id="SM00481">
    <property type="entry name" value="POLIIIAc"/>
    <property type="match status" value="1"/>
</dbReference>
<dbReference type="SUPFAM" id="SSF89550">
    <property type="entry name" value="PHP domain-like"/>
    <property type="match status" value="1"/>
</dbReference>
<accession>A1KCL7</accession>
<sequence>MATPPYAELHCLSNYSFLRGASHPEELVARAWALGYQGLAITDECSLAGAVRAHTGLAELRRDLRAAADAPEASAQDRLLAERAEQFRLVFGAEFRLACGLKLVLLAKNRAGYGNLSALITLARQRSEKGSYRLVRADLDAISPAGAVPDCYALWLPDAASSAEDAHWFARRFGERGWLAVELHSGADDAAWLGRTAELAAAAGLPRLAAGDVHMHLRGRRPLQDTLTAIRLGTTVFEAGTALHPNGERHLRHPLRLARLYPAELLEAAARLALACDFQLDTLRYEYPQEIVPAGETPASYLRRETQAGLARRYPQGVPPAIADNVEQELALIIELGYEPFFLTVYDIVCFARDEGILCQGRGSAANSIVCYALGITEVDPARASLLFGRFISRERDEPPDIDVDFEHDRRETVIQYIYGKYGRDRAALAATVIRYRTRGALRDAGRALGFGQPQIDALARSLAWWDKRDQLPARLIELGLDPASPRVAKWLDLTGMLIGFPRHLSQHVGGFVISRGPLGRLVPIENAAMPERSVIQWDKEDLEALGLLKVDVLALGMLSVIRRSLELVGRRRGAPFALPHIPPKDAATFDMLCAADSVGVFQVESRAQMAMLPRLRPRQFYDLVVQVAIVRPGPIQGDMVHPYLTNRADPAASARTLARLPADVRAVLERTLGVPIFQEQVMKLAEVAAGFTPGEADQLRRAMASWRQKGHIERFKQKLRDGMKARGHDSDFADALCRQIEGFGEYGFPESHAASFALLAYASAWLKRHEPEAFLCGLLNSQPMGFYAPAQLLQDARRHGVEVRPVDVTASAWDATLEDLPADPDAGRRPAVRLGLREISGFPEAAALRVAEARAAAPFADTNDLARRAALQRRELDLLAAAGALQALAGHRRQAAWQVAGVCLQGDLFDAAPPPEAAVALAAPQEAEELLADYAATGFSLGRHPLALLRARLARGRFLQAAALARTPDRALVRVAGIVTGRQRPGTAQGVIFVTLEDETGSANVVVYAGLAERQRRELLGARLLGVFGQLQREGEVVHLLAKRLVDLSPWVGGLAARSRDFH</sequence>
<comment type="function">
    <text evidence="1">DNA polymerase involved in damage-induced mutagenesis and translesion synthesis (TLS). It is not the major replicative DNA polymerase.</text>
</comment>
<comment type="catalytic activity">
    <reaction evidence="1">
        <text>DNA(n) + a 2'-deoxyribonucleoside 5'-triphosphate = DNA(n+1) + diphosphate</text>
        <dbReference type="Rhea" id="RHEA:22508"/>
        <dbReference type="Rhea" id="RHEA-COMP:17339"/>
        <dbReference type="Rhea" id="RHEA-COMP:17340"/>
        <dbReference type="ChEBI" id="CHEBI:33019"/>
        <dbReference type="ChEBI" id="CHEBI:61560"/>
        <dbReference type="ChEBI" id="CHEBI:173112"/>
        <dbReference type="EC" id="2.7.7.7"/>
    </reaction>
</comment>
<comment type="subcellular location">
    <subcellularLocation>
        <location evidence="1">Cytoplasm</location>
    </subcellularLocation>
</comment>
<comment type="similarity">
    <text evidence="1">Belongs to the DNA polymerase type-C family. DnaE2 subfamily.</text>
</comment>
<gene>
    <name evidence="1" type="primary">dnaE2</name>
    <name type="ordered locus">azo3957</name>
</gene>
<evidence type="ECO:0000255" key="1">
    <source>
        <dbReference type="HAMAP-Rule" id="MF_01902"/>
    </source>
</evidence>
<protein>
    <recommendedName>
        <fullName evidence="1">Error-prone DNA polymerase</fullName>
        <ecNumber evidence="1">2.7.7.7</ecNumber>
    </recommendedName>
</protein>